<gene>
    <name evidence="1" type="primary">atpB</name>
    <name type="ordered locus">lmo2535</name>
</gene>
<feature type="chain" id="PRO_1000145287" description="ATP synthase subunit a">
    <location>
        <begin position="1"/>
        <end position="238"/>
    </location>
</feature>
<feature type="transmembrane region" description="Helical" evidence="1">
    <location>
        <begin position="17"/>
        <end position="37"/>
    </location>
</feature>
<feature type="transmembrane region" description="Helical" evidence="1">
    <location>
        <begin position="75"/>
        <end position="95"/>
    </location>
</feature>
<feature type="transmembrane region" description="Helical" evidence="1">
    <location>
        <begin position="112"/>
        <end position="132"/>
    </location>
</feature>
<feature type="transmembrane region" description="Helical" evidence="1">
    <location>
        <begin position="172"/>
        <end position="192"/>
    </location>
</feature>
<feature type="transmembrane region" description="Helical" evidence="1">
    <location>
        <begin position="194"/>
        <end position="214"/>
    </location>
</feature>
<proteinExistence type="inferred from homology"/>
<reference key="1">
    <citation type="journal article" date="2001" name="Science">
        <title>Comparative genomics of Listeria species.</title>
        <authorList>
            <person name="Glaser P."/>
            <person name="Frangeul L."/>
            <person name="Buchrieser C."/>
            <person name="Rusniok C."/>
            <person name="Amend A."/>
            <person name="Baquero F."/>
            <person name="Berche P."/>
            <person name="Bloecker H."/>
            <person name="Brandt P."/>
            <person name="Chakraborty T."/>
            <person name="Charbit A."/>
            <person name="Chetouani F."/>
            <person name="Couve E."/>
            <person name="de Daruvar A."/>
            <person name="Dehoux P."/>
            <person name="Domann E."/>
            <person name="Dominguez-Bernal G."/>
            <person name="Duchaud E."/>
            <person name="Durant L."/>
            <person name="Dussurget O."/>
            <person name="Entian K.-D."/>
            <person name="Fsihi H."/>
            <person name="Garcia-del Portillo F."/>
            <person name="Garrido P."/>
            <person name="Gautier L."/>
            <person name="Goebel W."/>
            <person name="Gomez-Lopez N."/>
            <person name="Hain T."/>
            <person name="Hauf J."/>
            <person name="Jackson D."/>
            <person name="Jones L.-M."/>
            <person name="Kaerst U."/>
            <person name="Kreft J."/>
            <person name="Kuhn M."/>
            <person name="Kunst F."/>
            <person name="Kurapkat G."/>
            <person name="Madueno E."/>
            <person name="Maitournam A."/>
            <person name="Mata Vicente J."/>
            <person name="Ng E."/>
            <person name="Nedjari H."/>
            <person name="Nordsiek G."/>
            <person name="Novella S."/>
            <person name="de Pablos B."/>
            <person name="Perez-Diaz J.-C."/>
            <person name="Purcell R."/>
            <person name="Remmel B."/>
            <person name="Rose M."/>
            <person name="Schlueter T."/>
            <person name="Simoes N."/>
            <person name="Tierrez A."/>
            <person name="Vazquez-Boland J.-A."/>
            <person name="Voss H."/>
            <person name="Wehland J."/>
            <person name="Cossart P."/>
        </authorList>
    </citation>
    <scope>NUCLEOTIDE SEQUENCE [LARGE SCALE GENOMIC DNA]</scope>
    <source>
        <strain>ATCC BAA-679 / EGD-e</strain>
    </source>
</reference>
<accession>Q8Y4B6</accession>
<organism>
    <name type="scientific">Listeria monocytogenes serovar 1/2a (strain ATCC BAA-679 / EGD-e)</name>
    <dbReference type="NCBI Taxonomy" id="169963"/>
    <lineage>
        <taxon>Bacteria</taxon>
        <taxon>Bacillati</taxon>
        <taxon>Bacillota</taxon>
        <taxon>Bacilli</taxon>
        <taxon>Bacillales</taxon>
        <taxon>Listeriaceae</taxon>
        <taxon>Listeria</taxon>
    </lineage>
</organism>
<comment type="function">
    <text evidence="1">Key component of the proton channel; it plays a direct role in the translocation of protons across the membrane.</text>
</comment>
<comment type="subunit">
    <text evidence="1">F-type ATPases have 2 components, CF(1) - the catalytic core - and CF(0) - the membrane proton channel. CF(1) has five subunits: alpha(3), beta(3), gamma(1), delta(1), epsilon(1). CF(0) has three main subunits: a(1), b(2) and c(9-12). The alpha and beta chains form an alternating ring which encloses part of the gamma chain. CF(1) is attached to CF(0) by a central stalk formed by the gamma and epsilon chains, while a peripheral stalk is formed by the delta and b chains.</text>
</comment>
<comment type="subcellular location">
    <subcellularLocation>
        <location evidence="1">Cell membrane</location>
        <topology evidence="1">Multi-pass membrane protein</topology>
    </subcellularLocation>
</comment>
<comment type="similarity">
    <text evidence="1">Belongs to the ATPase A chain family.</text>
</comment>
<name>ATP6_LISMO</name>
<evidence type="ECO:0000255" key="1">
    <source>
        <dbReference type="HAMAP-Rule" id="MF_01393"/>
    </source>
</evidence>
<protein>
    <recommendedName>
        <fullName evidence="1">ATP synthase subunit a</fullName>
    </recommendedName>
    <alternativeName>
        <fullName evidence="1">ATP synthase F0 sector subunit a</fullName>
    </alternativeName>
    <alternativeName>
        <fullName evidence="1">F-ATPase subunit 6</fullName>
    </alternativeName>
</protein>
<sequence length="238" mass="26981">MEEEFPTISLLGIDFNLSNILMITVTCVIVLLIAIICTRNLQRRPTGKQNFIEWVMDFVRGIINSNMDWKTGGRFHVLGITILMFVFVANMLGLPLQIAVNDEVWWRSPTADPIVTLTLAIMVLGLTHYYGIKMRGFKHYFVGTYLSPMKFLFPLKLVEEFANTLTLGLRLYGNIFAGEVLLTIIATQLAHINIFVGVLAIIPAIIWQAFSLFIGAIQAYIFTMLTMVYMSHKVSDEH</sequence>
<keyword id="KW-0066">ATP synthesis</keyword>
<keyword id="KW-1003">Cell membrane</keyword>
<keyword id="KW-0138">CF(0)</keyword>
<keyword id="KW-0375">Hydrogen ion transport</keyword>
<keyword id="KW-0406">Ion transport</keyword>
<keyword id="KW-0472">Membrane</keyword>
<keyword id="KW-1185">Reference proteome</keyword>
<keyword id="KW-0812">Transmembrane</keyword>
<keyword id="KW-1133">Transmembrane helix</keyword>
<keyword id="KW-0813">Transport</keyword>
<dbReference type="EMBL" id="AL591983">
    <property type="protein sequence ID" value="CAD00613.1"/>
    <property type="molecule type" value="Genomic_DNA"/>
</dbReference>
<dbReference type="PIR" id="AG1391">
    <property type="entry name" value="AG1391"/>
</dbReference>
<dbReference type="RefSeq" id="NP_466058.1">
    <property type="nucleotide sequence ID" value="NC_003210.1"/>
</dbReference>
<dbReference type="RefSeq" id="WP_003732518.1">
    <property type="nucleotide sequence ID" value="NZ_CP149495.1"/>
</dbReference>
<dbReference type="SMR" id="Q8Y4B6"/>
<dbReference type="STRING" id="169963.gene:17595246"/>
<dbReference type="PaxDb" id="169963-lmo2535"/>
<dbReference type="EnsemblBacteria" id="CAD00613">
    <property type="protein sequence ID" value="CAD00613"/>
    <property type="gene ID" value="CAD00613"/>
</dbReference>
<dbReference type="GeneID" id="93240403"/>
<dbReference type="GeneID" id="987279"/>
<dbReference type="KEGG" id="lmo:lmo2535"/>
<dbReference type="PATRIC" id="fig|169963.11.peg.2596"/>
<dbReference type="eggNOG" id="COG0356">
    <property type="taxonomic scope" value="Bacteria"/>
</dbReference>
<dbReference type="HOGENOM" id="CLU_041018_2_3_9"/>
<dbReference type="OrthoDB" id="9789241at2"/>
<dbReference type="PhylomeDB" id="Q8Y4B6"/>
<dbReference type="BioCyc" id="LMON169963:LMO2535-MONOMER"/>
<dbReference type="Proteomes" id="UP000000817">
    <property type="component" value="Chromosome"/>
</dbReference>
<dbReference type="GO" id="GO:0005886">
    <property type="term" value="C:plasma membrane"/>
    <property type="evidence" value="ECO:0000318"/>
    <property type="project" value="GO_Central"/>
</dbReference>
<dbReference type="GO" id="GO:0045259">
    <property type="term" value="C:proton-transporting ATP synthase complex"/>
    <property type="evidence" value="ECO:0007669"/>
    <property type="project" value="UniProtKB-KW"/>
</dbReference>
<dbReference type="GO" id="GO:0046933">
    <property type="term" value="F:proton-transporting ATP synthase activity, rotational mechanism"/>
    <property type="evidence" value="ECO:0000318"/>
    <property type="project" value="GO_Central"/>
</dbReference>
<dbReference type="GO" id="GO:0042777">
    <property type="term" value="P:proton motive force-driven plasma membrane ATP synthesis"/>
    <property type="evidence" value="ECO:0000318"/>
    <property type="project" value="GO_Central"/>
</dbReference>
<dbReference type="CDD" id="cd00310">
    <property type="entry name" value="ATP-synt_Fo_a_6"/>
    <property type="match status" value="1"/>
</dbReference>
<dbReference type="FunFam" id="1.20.120.220:FF:000005">
    <property type="entry name" value="ATP synthase subunit a"/>
    <property type="match status" value="1"/>
</dbReference>
<dbReference type="Gene3D" id="1.20.120.220">
    <property type="entry name" value="ATP synthase, F0 complex, subunit A"/>
    <property type="match status" value="1"/>
</dbReference>
<dbReference type="HAMAP" id="MF_01393">
    <property type="entry name" value="ATP_synth_a_bact"/>
    <property type="match status" value="1"/>
</dbReference>
<dbReference type="InterPro" id="IPR045082">
    <property type="entry name" value="ATP_syn_F0_a_bact/chloroplast"/>
</dbReference>
<dbReference type="InterPro" id="IPR000568">
    <property type="entry name" value="ATP_synth_F0_asu"/>
</dbReference>
<dbReference type="InterPro" id="IPR023011">
    <property type="entry name" value="ATP_synth_F0_asu_AS"/>
</dbReference>
<dbReference type="InterPro" id="IPR035908">
    <property type="entry name" value="F0_ATP_A_sf"/>
</dbReference>
<dbReference type="NCBIfam" id="TIGR01131">
    <property type="entry name" value="ATP_synt_6_or_A"/>
    <property type="match status" value="1"/>
</dbReference>
<dbReference type="NCBIfam" id="NF004479">
    <property type="entry name" value="PRK05815.1-4"/>
    <property type="match status" value="1"/>
</dbReference>
<dbReference type="PANTHER" id="PTHR42823">
    <property type="entry name" value="ATP SYNTHASE SUBUNIT A, CHLOROPLASTIC"/>
    <property type="match status" value="1"/>
</dbReference>
<dbReference type="PANTHER" id="PTHR42823:SF3">
    <property type="entry name" value="ATP SYNTHASE SUBUNIT A, CHLOROPLASTIC"/>
    <property type="match status" value="1"/>
</dbReference>
<dbReference type="Pfam" id="PF00119">
    <property type="entry name" value="ATP-synt_A"/>
    <property type="match status" value="1"/>
</dbReference>
<dbReference type="PRINTS" id="PR00123">
    <property type="entry name" value="ATPASEA"/>
</dbReference>
<dbReference type="SUPFAM" id="SSF81336">
    <property type="entry name" value="F1F0 ATP synthase subunit A"/>
    <property type="match status" value="1"/>
</dbReference>
<dbReference type="PROSITE" id="PS00449">
    <property type="entry name" value="ATPASE_A"/>
    <property type="match status" value="1"/>
</dbReference>